<organism>
    <name type="scientific">Rattus norvegicus</name>
    <name type="common">Rat</name>
    <dbReference type="NCBI Taxonomy" id="10116"/>
    <lineage>
        <taxon>Eukaryota</taxon>
        <taxon>Metazoa</taxon>
        <taxon>Chordata</taxon>
        <taxon>Craniata</taxon>
        <taxon>Vertebrata</taxon>
        <taxon>Euteleostomi</taxon>
        <taxon>Mammalia</taxon>
        <taxon>Eutheria</taxon>
        <taxon>Euarchontoglires</taxon>
        <taxon>Glires</taxon>
        <taxon>Rodentia</taxon>
        <taxon>Myomorpha</taxon>
        <taxon>Muroidea</taxon>
        <taxon>Muridae</taxon>
        <taxon>Murinae</taxon>
        <taxon>Rattus</taxon>
    </lineage>
</organism>
<dbReference type="EC" id="2.1.2.9" evidence="2"/>
<dbReference type="EMBL" id="BC088470">
    <property type="protein sequence ID" value="AAH88470.1"/>
    <property type="molecule type" value="mRNA"/>
</dbReference>
<dbReference type="RefSeq" id="NP_001009697.1">
    <property type="nucleotide sequence ID" value="NM_001009697.1"/>
</dbReference>
<dbReference type="SMR" id="Q5I0C5"/>
<dbReference type="FunCoup" id="Q5I0C5">
    <property type="interactions" value="408"/>
</dbReference>
<dbReference type="STRING" id="10116.ENSRNOP00000019671"/>
<dbReference type="GlyGen" id="Q5I0C5">
    <property type="glycosylation" value="1 site"/>
</dbReference>
<dbReference type="PhosphoSitePlus" id="Q5I0C5"/>
<dbReference type="PaxDb" id="10116-ENSRNOP00000019671"/>
<dbReference type="GeneID" id="315763"/>
<dbReference type="KEGG" id="rno:315763"/>
<dbReference type="UCSC" id="RGD:1309462">
    <property type="organism name" value="rat"/>
</dbReference>
<dbReference type="AGR" id="RGD:1309462"/>
<dbReference type="CTD" id="123263"/>
<dbReference type="RGD" id="1309462">
    <property type="gene designation" value="Mtfmt"/>
</dbReference>
<dbReference type="VEuPathDB" id="HostDB:ENSRNOG00000014602"/>
<dbReference type="eggNOG" id="KOG3082">
    <property type="taxonomic scope" value="Eukaryota"/>
</dbReference>
<dbReference type="HOGENOM" id="CLU_033347_0_0_1"/>
<dbReference type="InParanoid" id="Q5I0C5"/>
<dbReference type="OrthoDB" id="43315at9989"/>
<dbReference type="PhylomeDB" id="Q5I0C5"/>
<dbReference type="TreeFam" id="TF323405"/>
<dbReference type="PRO" id="PR:Q5I0C5"/>
<dbReference type="Proteomes" id="UP000002494">
    <property type="component" value="Chromosome 8"/>
</dbReference>
<dbReference type="Bgee" id="ENSRNOG00000014602">
    <property type="expression patterns" value="Expressed in duodenum and 20 other cell types or tissues"/>
</dbReference>
<dbReference type="GO" id="GO:0005739">
    <property type="term" value="C:mitochondrion"/>
    <property type="evidence" value="ECO:0000250"/>
    <property type="project" value="UniProtKB"/>
</dbReference>
<dbReference type="GO" id="GO:0004479">
    <property type="term" value="F:methionyl-tRNA formyltransferase activity"/>
    <property type="evidence" value="ECO:0000250"/>
    <property type="project" value="UniProtKB"/>
</dbReference>
<dbReference type="GO" id="GO:0071951">
    <property type="term" value="P:conversion of methionyl-tRNA to N-formyl-methionyl-tRNA"/>
    <property type="evidence" value="ECO:0000250"/>
    <property type="project" value="UniProtKB"/>
</dbReference>
<dbReference type="CDD" id="cd08646">
    <property type="entry name" value="FMT_core_Met-tRNA-FMT_N"/>
    <property type="match status" value="1"/>
</dbReference>
<dbReference type="FunFam" id="3.40.50.12230:FF:000003">
    <property type="entry name" value="methionyl-tRNA formyltransferase, mitochondrial"/>
    <property type="match status" value="1"/>
</dbReference>
<dbReference type="Gene3D" id="3.40.50.12230">
    <property type="match status" value="1"/>
</dbReference>
<dbReference type="InterPro" id="IPR005794">
    <property type="entry name" value="Fmt"/>
</dbReference>
<dbReference type="InterPro" id="IPR005793">
    <property type="entry name" value="Formyl_trans_C"/>
</dbReference>
<dbReference type="InterPro" id="IPR002376">
    <property type="entry name" value="Formyl_transf_N"/>
</dbReference>
<dbReference type="InterPro" id="IPR036477">
    <property type="entry name" value="Formyl_transf_N_sf"/>
</dbReference>
<dbReference type="InterPro" id="IPR041711">
    <property type="entry name" value="Met-tRNA-FMT_N"/>
</dbReference>
<dbReference type="NCBIfam" id="TIGR00460">
    <property type="entry name" value="fmt"/>
    <property type="match status" value="1"/>
</dbReference>
<dbReference type="PANTHER" id="PTHR11138">
    <property type="entry name" value="METHIONYL-TRNA FORMYLTRANSFERASE"/>
    <property type="match status" value="1"/>
</dbReference>
<dbReference type="PANTHER" id="PTHR11138:SF5">
    <property type="entry name" value="METHIONYL-TRNA FORMYLTRANSFERASE, MITOCHONDRIAL"/>
    <property type="match status" value="1"/>
</dbReference>
<dbReference type="Pfam" id="PF02911">
    <property type="entry name" value="Formyl_trans_C"/>
    <property type="match status" value="1"/>
</dbReference>
<dbReference type="Pfam" id="PF00551">
    <property type="entry name" value="Formyl_trans_N"/>
    <property type="match status" value="1"/>
</dbReference>
<dbReference type="SUPFAM" id="SSF53328">
    <property type="entry name" value="Formyltransferase"/>
    <property type="match status" value="1"/>
</dbReference>
<feature type="transit peptide" description="Mitochondrion" evidence="3">
    <location>
        <begin position="1"/>
        <end status="unknown"/>
    </location>
</feature>
<feature type="chain" id="PRO_0000010095" description="Methionyl-tRNA formyltransferase, mitochondrial">
    <location>
        <begin status="unknown"/>
        <end position="385"/>
    </location>
</feature>
<sequence length="385" mass="42997">MLLPRRCWGPWLAGRRPRCSCQSPAGFSGKDRRSSRVREKPPWRVLFFGTDHFAREALRALHAARDNKEEKLIEKLEVVTVPSISPKGLPVKQYAIQSQLPVYEWPDMGSGEYDVGVVASFGRLLSEALILKFPYGILNVHPSCLPRWRGPAPIIHTVLHGDTVTGVTIMQVRPKRFDVGPILKQETVAVPPKSTSKELEAVLSKLGANMLISVLKNLPESLNNGRPQPAEGVTYAPKVSAGTSCVKWEEQTSEQVLRLHLAIGDIVPLQTLWMENTVKLLDLVEVNNSILADPKVMGQTVTPGSVVYHRPSQMLLVHCKDGWIGVRSIMHKKTLTATDFYNGYLHAWYQKNSHAYPSQCKFQTLRLPTKTQQKTKLLLCSALSS</sequence>
<name>FMT_RAT</name>
<evidence type="ECO:0000250" key="1">
    <source>
        <dbReference type="UniProtKB" id="O77480"/>
    </source>
</evidence>
<evidence type="ECO:0000250" key="2">
    <source>
        <dbReference type="UniProtKB" id="Q96DP5"/>
    </source>
</evidence>
<evidence type="ECO:0000255" key="3"/>
<evidence type="ECO:0000305" key="4"/>
<proteinExistence type="evidence at transcript level"/>
<keyword id="KW-0496">Mitochondrion</keyword>
<keyword id="KW-0648">Protein biosynthesis</keyword>
<keyword id="KW-1185">Reference proteome</keyword>
<keyword id="KW-0808">Transferase</keyword>
<keyword id="KW-0809">Transit peptide</keyword>
<comment type="function">
    <text evidence="2">Methionyl-tRNA formyltransferase that formylates methionyl-tRNA in mitochondria and is crucial for translation initiation.</text>
</comment>
<comment type="catalytic activity">
    <reaction evidence="2">
        <text>L-methionyl-tRNA(fMet) + (6R)-10-formyltetrahydrofolate = N-formyl-L-methionyl-tRNA(fMet) + (6S)-5,6,7,8-tetrahydrofolate + H(+)</text>
        <dbReference type="Rhea" id="RHEA:24380"/>
        <dbReference type="Rhea" id="RHEA-COMP:9952"/>
        <dbReference type="Rhea" id="RHEA-COMP:9953"/>
        <dbReference type="ChEBI" id="CHEBI:15378"/>
        <dbReference type="ChEBI" id="CHEBI:57453"/>
        <dbReference type="ChEBI" id="CHEBI:78530"/>
        <dbReference type="ChEBI" id="CHEBI:78844"/>
        <dbReference type="ChEBI" id="CHEBI:195366"/>
        <dbReference type="EC" id="2.1.2.9"/>
    </reaction>
    <physiologicalReaction direction="left-to-right" evidence="2">
        <dbReference type="Rhea" id="RHEA:24381"/>
    </physiologicalReaction>
</comment>
<comment type="subcellular location">
    <subcellularLocation>
        <location evidence="1">Mitochondrion</location>
    </subcellularLocation>
</comment>
<comment type="domain">
    <text>Composed of an N- and a C-terminal domain. The N-terminal domain carries the tetrahydrofolate (THF)-binding site and the C-terminal domain is presumably involved in positioning the Met-tRNA substrate for the formylation reaction.</text>
</comment>
<comment type="similarity">
    <text evidence="4">Belongs to the Fmt family.</text>
</comment>
<protein>
    <recommendedName>
        <fullName>Methionyl-tRNA formyltransferase, mitochondrial</fullName>
        <shortName>MtFMT</shortName>
        <ecNumber evidence="2">2.1.2.9</ecNumber>
    </recommendedName>
</protein>
<accession>Q5I0C5</accession>
<reference key="1">
    <citation type="journal article" date="2004" name="Genome Res.">
        <title>The status, quality, and expansion of the NIH full-length cDNA project: the Mammalian Gene Collection (MGC).</title>
        <authorList>
            <consortium name="The MGC Project Team"/>
        </authorList>
    </citation>
    <scope>NUCLEOTIDE SEQUENCE [LARGE SCALE MRNA]</scope>
    <source>
        <tissue>Kidney</tissue>
    </source>
</reference>
<gene>
    <name type="primary">Mtfmt</name>
</gene>